<feature type="chain" id="PRO_0000276824" description="Large ribosomal subunit protein bL36c">
    <location>
        <begin position="1"/>
        <end position="37"/>
    </location>
</feature>
<geneLocation type="chloroplast"/>
<gene>
    <name evidence="1" type="primary">rpl36</name>
</gene>
<protein>
    <recommendedName>
        <fullName evidence="1">Large ribosomal subunit protein bL36c</fullName>
    </recommendedName>
    <alternativeName>
        <fullName evidence="2">50S ribosomal protein L36, chloroplastic</fullName>
    </alternativeName>
</protein>
<comment type="subcellular location">
    <subcellularLocation>
        <location>Plastid</location>
        <location>Chloroplast</location>
    </subcellularLocation>
</comment>
<comment type="similarity">
    <text evidence="1">Belongs to the bacterial ribosomal protein bL36 family.</text>
</comment>
<proteinExistence type="inferred from homology"/>
<sequence length="37" mass="4460">MKIRASVRKICEKCRLIRRRGRIIVICSNPRHKQRQG</sequence>
<dbReference type="EMBL" id="AB237912">
    <property type="protein sequence ID" value="BAE46688.1"/>
    <property type="molecule type" value="Genomic_DNA"/>
</dbReference>
<dbReference type="RefSeq" id="YP_358712.1">
    <property type="nucleotide sequence ID" value="NC_007500.1"/>
</dbReference>
<dbReference type="SMR" id="Q3C1M1"/>
<dbReference type="GeneID" id="3735088"/>
<dbReference type="KEGG" id="nsy:3735088"/>
<dbReference type="Proteomes" id="UP000189701">
    <property type="component" value="Chloroplast Pltd"/>
</dbReference>
<dbReference type="GO" id="GO:0009507">
    <property type="term" value="C:chloroplast"/>
    <property type="evidence" value="ECO:0007669"/>
    <property type="project" value="UniProtKB-SubCell"/>
</dbReference>
<dbReference type="GO" id="GO:1990904">
    <property type="term" value="C:ribonucleoprotein complex"/>
    <property type="evidence" value="ECO:0007669"/>
    <property type="project" value="UniProtKB-KW"/>
</dbReference>
<dbReference type="GO" id="GO:0005840">
    <property type="term" value="C:ribosome"/>
    <property type="evidence" value="ECO:0007669"/>
    <property type="project" value="UniProtKB-KW"/>
</dbReference>
<dbReference type="GO" id="GO:0003735">
    <property type="term" value="F:structural constituent of ribosome"/>
    <property type="evidence" value="ECO:0007669"/>
    <property type="project" value="InterPro"/>
</dbReference>
<dbReference type="GO" id="GO:0006412">
    <property type="term" value="P:translation"/>
    <property type="evidence" value="ECO:0007669"/>
    <property type="project" value="UniProtKB-UniRule"/>
</dbReference>
<dbReference type="HAMAP" id="MF_00251">
    <property type="entry name" value="Ribosomal_bL36"/>
    <property type="match status" value="1"/>
</dbReference>
<dbReference type="InterPro" id="IPR000473">
    <property type="entry name" value="Ribosomal_bL36"/>
</dbReference>
<dbReference type="InterPro" id="IPR035977">
    <property type="entry name" value="Ribosomal_bL36_sp"/>
</dbReference>
<dbReference type="NCBIfam" id="TIGR01022">
    <property type="entry name" value="rpmJ_bact"/>
    <property type="match status" value="1"/>
</dbReference>
<dbReference type="PANTHER" id="PTHR42888">
    <property type="entry name" value="50S RIBOSOMAL PROTEIN L36, CHLOROPLASTIC"/>
    <property type="match status" value="1"/>
</dbReference>
<dbReference type="PANTHER" id="PTHR42888:SF1">
    <property type="entry name" value="LARGE RIBOSOMAL SUBUNIT PROTEIN BL36C"/>
    <property type="match status" value="1"/>
</dbReference>
<dbReference type="Pfam" id="PF00444">
    <property type="entry name" value="Ribosomal_L36"/>
    <property type="match status" value="1"/>
</dbReference>
<dbReference type="SUPFAM" id="SSF57840">
    <property type="entry name" value="Ribosomal protein L36"/>
    <property type="match status" value="1"/>
</dbReference>
<dbReference type="PROSITE" id="PS00828">
    <property type="entry name" value="RIBOSOMAL_L36"/>
    <property type="match status" value="1"/>
</dbReference>
<reference key="1">
    <citation type="journal article" date="2006" name="Mol. Genet. Genomics">
        <title>The chloroplast genome of Nicotiana sylvestris and Nicotiana tomentosiformis: complete sequencing confirms that the Nicotiana sylvestris progenitor is the maternal genome donor of Nicotiana tabacum.</title>
        <authorList>
            <person name="Yukawa M."/>
            <person name="Tsudzuki T."/>
            <person name="Sugiura M."/>
        </authorList>
    </citation>
    <scope>NUCLEOTIDE SEQUENCE [LARGE SCALE GENOMIC DNA]</scope>
</reference>
<accession>Q3C1M1</accession>
<organism>
    <name type="scientific">Nicotiana sylvestris</name>
    <name type="common">Wood tobacco</name>
    <name type="synonym">South American tobacco</name>
    <dbReference type="NCBI Taxonomy" id="4096"/>
    <lineage>
        <taxon>Eukaryota</taxon>
        <taxon>Viridiplantae</taxon>
        <taxon>Streptophyta</taxon>
        <taxon>Embryophyta</taxon>
        <taxon>Tracheophyta</taxon>
        <taxon>Spermatophyta</taxon>
        <taxon>Magnoliopsida</taxon>
        <taxon>eudicotyledons</taxon>
        <taxon>Gunneridae</taxon>
        <taxon>Pentapetalae</taxon>
        <taxon>asterids</taxon>
        <taxon>lamiids</taxon>
        <taxon>Solanales</taxon>
        <taxon>Solanaceae</taxon>
        <taxon>Nicotianoideae</taxon>
        <taxon>Nicotianeae</taxon>
        <taxon>Nicotiana</taxon>
    </lineage>
</organism>
<evidence type="ECO:0000255" key="1">
    <source>
        <dbReference type="HAMAP-Rule" id="MF_00251"/>
    </source>
</evidence>
<evidence type="ECO:0000305" key="2"/>
<keyword id="KW-0150">Chloroplast</keyword>
<keyword id="KW-0934">Plastid</keyword>
<keyword id="KW-1185">Reference proteome</keyword>
<keyword id="KW-0687">Ribonucleoprotein</keyword>
<keyword id="KW-0689">Ribosomal protein</keyword>
<name>RK36_NICSY</name>